<accession>Q8ZPK6</accession>
<name>BIOD2_SALTY</name>
<dbReference type="EC" id="6.3.3.3" evidence="1"/>
<dbReference type="EMBL" id="AE006468">
    <property type="protein sequence ID" value="AAL20408.1"/>
    <property type="molecule type" value="Genomic_DNA"/>
</dbReference>
<dbReference type="RefSeq" id="NP_460449.1">
    <property type="nucleotide sequence ID" value="NC_003197.2"/>
</dbReference>
<dbReference type="SMR" id="Q8ZPK6"/>
<dbReference type="STRING" id="99287.STM1489"/>
<dbReference type="PaxDb" id="99287-STM1489"/>
<dbReference type="GeneID" id="1253007"/>
<dbReference type="KEGG" id="stm:STM1489"/>
<dbReference type="PATRIC" id="fig|99287.12.peg.1574"/>
<dbReference type="HOGENOM" id="CLU_072551_0_0_6"/>
<dbReference type="OMA" id="WRTLMND"/>
<dbReference type="PhylomeDB" id="Q8ZPK6"/>
<dbReference type="BioCyc" id="SENT99287:STM1489-MONOMER"/>
<dbReference type="UniPathway" id="UPA00078">
    <property type="reaction ID" value="UER00161"/>
</dbReference>
<dbReference type="Proteomes" id="UP000001014">
    <property type="component" value="Chromosome"/>
</dbReference>
<dbReference type="GO" id="GO:0005829">
    <property type="term" value="C:cytosol"/>
    <property type="evidence" value="ECO:0000318"/>
    <property type="project" value="GO_Central"/>
</dbReference>
<dbReference type="GO" id="GO:0005524">
    <property type="term" value="F:ATP binding"/>
    <property type="evidence" value="ECO:0007669"/>
    <property type="project" value="UniProtKB-UniRule"/>
</dbReference>
<dbReference type="GO" id="GO:0004141">
    <property type="term" value="F:dethiobiotin synthase activity"/>
    <property type="evidence" value="ECO:0000318"/>
    <property type="project" value="GO_Central"/>
</dbReference>
<dbReference type="GO" id="GO:0000287">
    <property type="term" value="F:magnesium ion binding"/>
    <property type="evidence" value="ECO:0007669"/>
    <property type="project" value="UniProtKB-UniRule"/>
</dbReference>
<dbReference type="GO" id="GO:0009102">
    <property type="term" value="P:biotin biosynthetic process"/>
    <property type="evidence" value="ECO:0000318"/>
    <property type="project" value="GO_Central"/>
</dbReference>
<dbReference type="CDD" id="cd03109">
    <property type="entry name" value="DTBS"/>
    <property type="match status" value="1"/>
</dbReference>
<dbReference type="FunFam" id="3.40.50.300:FF:000292">
    <property type="entry name" value="ATP-dependent dethiobiotin synthetase BioD"/>
    <property type="match status" value="1"/>
</dbReference>
<dbReference type="Gene3D" id="3.40.50.300">
    <property type="entry name" value="P-loop containing nucleotide triphosphate hydrolases"/>
    <property type="match status" value="1"/>
</dbReference>
<dbReference type="HAMAP" id="MF_00336">
    <property type="entry name" value="BioD"/>
    <property type="match status" value="1"/>
</dbReference>
<dbReference type="InterPro" id="IPR004472">
    <property type="entry name" value="DTB_synth_BioD"/>
</dbReference>
<dbReference type="InterPro" id="IPR027417">
    <property type="entry name" value="P-loop_NTPase"/>
</dbReference>
<dbReference type="NCBIfam" id="TIGR00347">
    <property type="entry name" value="bioD"/>
    <property type="match status" value="1"/>
</dbReference>
<dbReference type="PANTHER" id="PTHR43210:SF4">
    <property type="entry name" value="ATP-DEPENDENT DETHIOBIOTIN SYNTHETASE BIOD 2"/>
    <property type="match status" value="1"/>
</dbReference>
<dbReference type="PANTHER" id="PTHR43210">
    <property type="entry name" value="DETHIOBIOTIN SYNTHETASE"/>
    <property type="match status" value="1"/>
</dbReference>
<dbReference type="Pfam" id="PF13500">
    <property type="entry name" value="AAA_26"/>
    <property type="match status" value="1"/>
</dbReference>
<dbReference type="PIRSF" id="PIRSF006755">
    <property type="entry name" value="DTB_synth"/>
    <property type="match status" value="1"/>
</dbReference>
<dbReference type="SUPFAM" id="SSF52540">
    <property type="entry name" value="P-loop containing nucleoside triphosphate hydrolases"/>
    <property type="match status" value="1"/>
</dbReference>
<feature type="chain" id="PRO_0000187987" description="ATP-dependent dethiobiotin synthetase BioD 2">
    <location>
        <begin position="1"/>
        <end position="231"/>
    </location>
</feature>
<feature type="active site" evidence="1">
    <location>
        <position position="38"/>
    </location>
</feature>
<feature type="binding site" evidence="1">
    <location>
        <begin position="13"/>
        <end position="18"/>
    </location>
    <ligand>
        <name>ATP</name>
        <dbReference type="ChEBI" id="CHEBI:30616"/>
    </ligand>
</feature>
<feature type="binding site" evidence="1">
    <location>
        <position position="17"/>
    </location>
    <ligand>
        <name>Mg(2+)</name>
        <dbReference type="ChEBI" id="CHEBI:18420"/>
    </ligand>
</feature>
<feature type="binding site" evidence="1">
    <location>
        <position position="55"/>
    </location>
    <ligand>
        <name>ATP</name>
        <dbReference type="ChEBI" id="CHEBI:30616"/>
    </ligand>
</feature>
<feature type="binding site" evidence="1">
    <location>
        <position position="55"/>
    </location>
    <ligand>
        <name>Mg(2+)</name>
        <dbReference type="ChEBI" id="CHEBI:18420"/>
    </ligand>
</feature>
<feature type="binding site" evidence="1">
    <location>
        <begin position="112"/>
        <end position="115"/>
    </location>
    <ligand>
        <name>ATP</name>
        <dbReference type="ChEBI" id="CHEBI:30616"/>
    </ligand>
</feature>
<feature type="binding site" evidence="1">
    <location>
        <position position="112"/>
    </location>
    <ligand>
        <name>Mg(2+)</name>
        <dbReference type="ChEBI" id="CHEBI:18420"/>
    </ligand>
</feature>
<feature type="binding site" evidence="1">
    <location>
        <begin position="172"/>
        <end position="173"/>
    </location>
    <ligand>
        <name>ATP</name>
        <dbReference type="ChEBI" id="CHEBI:30616"/>
    </ligand>
</feature>
<feature type="binding site" evidence="1">
    <location>
        <begin position="201"/>
        <end position="203"/>
    </location>
    <ligand>
        <name>ATP</name>
        <dbReference type="ChEBI" id="CHEBI:30616"/>
    </ligand>
</feature>
<feature type="binding site" evidence="1">
    <location>
        <position position="208"/>
    </location>
    <ligand>
        <name>ATP</name>
        <dbReference type="ChEBI" id="CHEBI:30616"/>
    </ligand>
</feature>
<sequence length="231" mass="24782">MLKRFFITGTDTSVGKTVVSRALLQALASSGKSVAGYKPVAKGSKETAEGMRNKDALVLQSVSSLELPYEAINPIALSEEESSVAHSCPINYTLLSNGLASLSDKVDHVVVEGTGGWRSLMNDLRPLSEWVVQEQLPVLMVVGIQEGCINHALLTAQAVANDGLPLIGWVANRINPGLAHYAEIIDVLGKKLPAPLIGELPYLPRAEQRELGQYIRLSMLGSVLAVDRIMA</sequence>
<proteinExistence type="inferred from homology"/>
<gene>
    <name evidence="1" type="primary">bioD2</name>
    <name type="synonym">ynfK</name>
    <name type="ordered locus">STM1489</name>
</gene>
<comment type="function">
    <text evidence="1">Catalyzes a mechanistically unusual reaction, the ATP-dependent insertion of CO2 between the N7 and N8 nitrogen atoms of 7,8-diaminopelargonic acid (DAPA, also called 7,8-diammoniononanoate) to form a ureido ring.</text>
</comment>
<comment type="catalytic activity">
    <reaction evidence="1">
        <text>(7R,8S)-7,8-diammoniononanoate + CO2 + ATP = (4R,5S)-dethiobiotin + ADP + phosphate + 3 H(+)</text>
        <dbReference type="Rhea" id="RHEA:15805"/>
        <dbReference type="ChEBI" id="CHEBI:15378"/>
        <dbReference type="ChEBI" id="CHEBI:16526"/>
        <dbReference type="ChEBI" id="CHEBI:30616"/>
        <dbReference type="ChEBI" id="CHEBI:43474"/>
        <dbReference type="ChEBI" id="CHEBI:149469"/>
        <dbReference type="ChEBI" id="CHEBI:149473"/>
        <dbReference type="ChEBI" id="CHEBI:456216"/>
        <dbReference type="EC" id="6.3.3.3"/>
    </reaction>
</comment>
<comment type="cofactor">
    <cofactor evidence="1">
        <name>Mg(2+)</name>
        <dbReference type="ChEBI" id="CHEBI:18420"/>
    </cofactor>
</comment>
<comment type="pathway">
    <text evidence="1">Cofactor biosynthesis; biotin biosynthesis; biotin from 7,8-diaminononanoate: step 1/2.</text>
</comment>
<comment type="subunit">
    <text evidence="1">Homodimer.</text>
</comment>
<comment type="subcellular location">
    <subcellularLocation>
        <location evidence="1">Cytoplasm</location>
    </subcellularLocation>
</comment>
<comment type="similarity">
    <text evidence="1">Belongs to the dethiobiotin synthetase family.</text>
</comment>
<reference key="1">
    <citation type="journal article" date="2001" name="Nature">
        <title>Complete genome sequence of Salmonella enterica serovar Typhimurium LT2.</title>
        <authorList>
            <person name="McClelland M."/>
            <person name="Sanderson K.E."/>
            <person name="Spieth J."/>
            <person name="Clifton S.W."/>
            <person name="Latreille P."/>
            <person name="Courtney L."/>
            <person name="Porwollik S."/>
            <person name="Ali J."/>
            <person name="Dante M."/>
            <person name="Du F."/>
            <person name="Hou S."/>
            <person name="Layman D."/>
            <person name="Leonard S."/>
            <person name="Nguyen C."/>
            <person name="Scott K."/>
            <person name="Holmes A."/>
            <person name="Grewal N."/>
            <person name="Mulvaney E."/>
            <person name="Ryan E."/>
            <person name="Sun H."/>
            <person name="Florea L."/>
            <person name="Miller W."/>
            <person name="Stoneking T."/>
            <person name="Nhan M."/>
            <person name="Waterston R."/>
            <person name="Wilson R.K."/>
        </authorList>
    </citation>
    <scope>NUCLEOTIDE SEQUENCE [LARGE SCALE GENOMIC DNA]</scope>
    <source>
        <strain>LT2 / SGSC1412 / ATCC 700720</strain>
    </source>
</reference>
<keyword id="KW-0067">ATP-binding</keyword>
<keyword id="KW-0093">Biotin biosynthesis</keyword>
<keyword id="KW-0963">Cytoplasm</keyword>
<keyword id="KW-0436">Ligase</keyword>
<keyword id="KW-0460">Magnesium</keyword>
<keyword id="KW-0479">Metal-binding</keyword>
<keyword id="KW-0547">Nucleotide-binding</keyword>
<keyword id="KW-1185">Reference proteome</keyword>
<organism>
    <name type="scientific">Salmonella typhimurium (strain LT2 / SGSC1412 / ATCC 700720)</name>
    <dbReference type="NCBI Taxonomy" id="99287"/>
    <lineage>
        <taxon>Bacteria</taxon>
        <taxon>Pseudomonadati</taxon>
        <taxon>Pseudomonadota</taxon>
        <taxon>Gammaproteobacteria</taxon>
        <taxon>Enterobacterales</taxon>
        <taxon>Enterobacteriaceae</taxon>
        <taxon>Salmonella</taxon>
    </lineage>
</organism>
<evidence type="ECO:0000255" key="1">
    <source>
        <dbReference type="HAMAP-Rule" id="MF_00336"/>
    </source>
</evidence>
<protein>
    <recommendedName>
        <fullName evidence="1">ATP-dependent dethiobiotin synthetase BioD 2</fullName>
        <ecNumber evidence="1">6.3.3.3</ecNumber>
    </recommendedName>
    <alternativeName>
        <fullName evidence="1">DTB synthetase 2</fullName>
        <shortName evidence="1">DTBS 2</shortName>
    </alternativeName>
    <alternativeName>
        <fullName evidence="1">Dethiobiotin synthase 2</fullName>
    </alternativeName>
</protein>